<comment type="function">
    <text evidence="1">Catalyzes the NADPH-dependent reduction of N-acetyl-5-glutamyl phosphate to yield N-acetyl-L-glutamate 5-semialdehyde.</text>
</comment>
<comment type="catalytic activity">
    <reaction evidence="1">
        <text>N-acetyl-L-glutamate 5-semialdehyde + phosphate + NADP(+) = N-acetyl-L-glutamyl 5-phosphate + NADPH + H(+)</text>
        <dbReference type="Rhea" id="RHEA:21588"/>
        <dbReference type="ChEBI" id="CHEBI:15378"/>
        <dbReference type="ChEBI" id="CHEBI:29123"/>
        <dbReference type="ChEBI" id="CHEBI:43474"/>
        <dbReference type="ChEBI" id="CHEBI:57783"/>
        <dbReference type="ChEBI" id="CHEBI:57936"/>
        <dbReference type="ChEBI" id="CHEBI:58349"/>
        <dbReference type="EC" id="1.2.1.38"/>
    </reaction>
</comment>
<comment type="pathway">
    <text evidence="1">Amino-acid biosynthesis; L-arginine biosynthesis; N(2)-acetyl-L-ornithine from L-glutamate: step 3/4.</text>
</comment>
<comment type="subcellular location">
    <subcellularLocation>
        <location evidence="1">Cytoplasm</location>
    </subcellularLocation>
</comment>
<comment type="similarity">
    <text evidence="1">Belongs to the NAGSA dehydrogenase family. Type 1 subfamily.</text>
</comment>
<keyword id="KW-0028">Amino-acid biosynthesis</keyword>
<keyword id="KW-0055">Arginine biosynthesis</keyword>
<keyword id="KW-0963">Cytoplasm</keyword>
<keyword id="KW-0521">NADP</keyword>
<keyword id="KW-0560">Oxidoreductase</keyword>
<proteinExistence type="inferred from homology"/>
<reference key="1">
    <citation type="submission" date="2006-03" db="EMBL/GenBank/DDBJ databases">
        <title>Complete sequence of chromosome of Psychrobacter cryohalolentis K5.</title>
        <authorList>
            <consortium name="US DOE Joint Genome Institute"/>
            <person name="Copeland A."/>
            <person name="Lucas S."/>
            <person name="Lapidus A."/>
            <person name="Barry K."/>
            <person name="Detter J.C."/>
            <person name="Glavina T."/>
            <person name="Hammon N."/>
            <person name="Israni S."/>
            <person name="Dalin E."/>
            <person name="Tice H."/>
            <person name="Pitluck S."/>
            <person name="Brettin T."/>
            <person name="Bruce D."/>
            <person name="Han C."/>
            <person name="Tapia R."/>
            <person name="Sims D.R."/>
            <person name="Gilna P."/>
            <person name="Schmutz J."/>
            <person name="Larimer F."/>
            <person name="Land M."/>
            <person name="Hauser L."/>
            <person name="Kyrpides N."/>
            <person name="Kim E."/>
            <person name="Richardson P."/>
        </authorList>
    </citation>
    <scope>NUCLEOTIDE SEQUENCE [LARGE SCALE GENOMIC DNA]</scope>
    <source>
        <strain>ATCC BAA-1226 / DSM 17306 / VKM B-2378 / K5</strain>
    </source>
</reference>
<gene>
    <name evidence="1" type="primary">argC</name>
    <name type="ordered locus">Pcryo_1680</name>
</gene>
<accession>Q1QA46</accession>
<feature type="chain" id="PRO_1000011047" description="N-acetyl-gamma-glutamyl-phosphate reductase">
    <location>
        <begin position="1"/>
        <end position="355"/>
    </location>
</feature>
<feature type="active site" evidence="1">
    <location>
        <position position="152"/>
    </location>
</feature>
<name>ARGC_PSYCK</name>
<protein>
    <recommendedName>
        <fullName evidence="1">N-acetyl-gamma-glutamyl-phosphate reductase</fullName>
        <shortName evidence="1">AGPR</shortName>
        <ecNumber evidence="1">1.2.1.38</ecNumber>
    </recommendedName>
    <alternativeName>
        <fullName evidence="1">N-acetyl-glutamate semialdehyde dehydrogenase</fullName>
        <shortName evidence="1">NAGSA dehydrogenase</shortName>
    </alternativeName>
</protein>
<organism>
    <name type="scientific">Psychrobacter cryohalolentis (strain ATCC BAA-1226 / DSM 17306 / VKM B-2378 / K5)</name>
    <dbReference type="NCBI Taxonomy" id="335284"/>
    <lineage>
        <taxon>Bacteria</taxon>
        <taxon>Pseudomonadati</taxon>
        <taxon>Pseudomonadota</taxon>
        <taxon>Gammaproteobacteria</taxon>
        <taxon>Moraxellales</taxon>
        <taxon>Moraxellaceae</taxon>
        <taxon>Psychrobacter</taxon>
    </lineage>
</organism>
<evidence type="ECO:0000255" key="1">
    <source>
        <dbReference type="HAMAP-Rule" id="MF_00150"/>
    </source>
</evidence>
<sequence>MISAAIVGGTGYTGIELIRLLSAHPKVSIDLLTSRSEAGTRADEIFPSLRGISDIVFSDLGDETLATLQQCDVVFFATPHGVAMKQAEALTQAGVKVIDLAADFRLQSLSEFEHWYQQMHTCPDLLKTAVYGLPEVNRAKIAEALVVGNPGCYPTTAILGLKPIIEAQNKQSKQLIESRIVIDAKSGVSGAGRQASLALNYAESTDNFKAYSVEGHRHLPEIEQGVAQLLDSQFKHRIRFLPHLVPMIRGMLSSIHMELTDAGALVDWQQVFEQSYASEQFIDVMPKGLYPDTRSVRASNRLRIAVHQDNERAELTVIVVQDNLVKGAAGQAVQNMNVMFGLDESLGLNFAPIVP</sequence>
<dbReference type="EC" id="1.2.1.38" evidence="1"/>
<dbReference type="EMBL" id="CP000323">
    <property type="protein sequence ID" value="ABE75457.1"/>
    <property type="molecule type" value="Genomic_DNA"/>
</dbReference>
<dbReference type="RefSeq" id="WP_011514005.1">
    <property type="nucleotide sequence ID" value="NC_007969.1"/>
</dbReference>
<dbReference type="SMR" id="Q1QA46"/>
<dbReference type="STRING" id="335284.Pcryo_1680"/>
<dbReference type="KEGG" id="pcr:Pcryo_1680"/>
<dbReference type="eggNOG" id="COG0002">
    <property type="taxonomic scope" value="Bacteria"/>
</dbReference>
<dbReference type="HOGENOM" id="CLU_006384_0_1_6"/>
<dbReference type="UniPathway" id="UPA00068">
    <property type="reaction ID" value="UER00108"/>
</dbReference>
<dbReference type="Proteomes" id="UP000002425">
    <property type="component" value="Chromosome"/>
</dbReference>
<dbReference type="GO" id="GO:0005737">
    <property type="term" value="C:cytoplasm"/>
    <property type="evidence" value="ECO:0007669"/>
    <property type="project" value="UniProtKB-SubCell"/>
</dbReference>
<dbReference type="GO" id="GO:0003942">
    <property type="term" value="F:N-acetyl-gamma-glutamyl-phosphate reductase activity"/>
    <property type="evidence" value="ECO:0007669"/>
    <property type="project" value="UniProtKB-UniRule"/>
</dbReference>
<dbReference type="GO" id="GO:0051287">
    <property type="term" value="F:NAD binding"/>
    <property type="evidence" value="ECO:0007669"/>
    <property type="project" value="InterPro"/>
</dbReference>
<dbReference type="GO" id="GO:0070401">
    <property type="term" value="F:NADP+ binding"/>
    <property type="evidence" value="ECO:0007669"/>
    <property type="project" value="InterPro"/>
</dbReference>
<dbReference type="GO" id="GO:0006526">
    <property type="term" value="P:L-arginine biosynthetic process"/>
    <property type="evidence" value="ECO:0007669"/>
    <property type="project" value="UniProtKB-UniRule"/>
</dbReference>
<dbReference type="CDD" id="cd23934">
    <property type="entry name" value="AGPR_1_C"/>
    <property type="match status" value="1"/>
</dbReference>
<dbReference type="CDD" id="cd17895">
    <property type="entry name" value="AGPR_1_N"/>
    <property type="match status" value="1"/>
</dbReference>
<dbReference type="Gene3D" id="3.30.360.10">
    <property type="entry name" value="Dihydrodipicolinate Reductase, domain 2"/>
    <property type="match status" value="1"/>
</dbReference>
<dbReference type="Gene3D" id="3.40.50.720">
    <property type="entry name" value="NAD(P)-binding Rossmann-like Domain"/>
    <property type="match status" value="1"/>
</dbReference>
<dbReference type="HAMAP" id="MF_00150">
    <property type="entry name" value="ArgC_type1"/>
    <property type="match status" value="1"/>
</dbReference>
<dbReference type="InterPro" id="IPR023013">
    <property type="entry name" value="AGPR_AS"/>
</dbReference>
<dbReference type="InterPro" id="IPR000706">
    <property type="entry name" value="AGPR_type-1"/>
</dbReference>
<dbReference type="InterPro" id="IPR036291">
    <property type="entry name" value="NAD(P)-bd_dom_sf"/>
</dbReference>
<dbReference type="InterPro" id="IPR050085">
    <property type="entry name" value="NAGSA_dehydrogenase"/>
</dbReference>
<dbReference type="InterPro" id="IPR000534">
    <property type="entry name" value="Semialdehyde_DH_NAD-bd"/>
</dbReference>
<dbReference type="NCBIfam" id="TIGR01850">
    <property type="entry name" value="argC"/>
    <property type="match status" value="1"/>
</dbReference>
<dbReference type="PANTHER" id="PTHR32338:SF10">
    <property type="entry name" value="N-ACETYL-GAMMA-GLUTAMYL-PHOSPHATE REDUCTASE, CHLOROPLASTIC-RELATED"/>
    <property type="match status" value="1"/>
</dbReference>
<dbReference type="PANTHER" id="PTHR32338">
    <property type="entry name" value="N-ACETYL-GAMMA-GLUTAMYL-PHOSPHATE REDUCTASE, CHLOROPLASTIC-RELATED-RELATED"/>
    <property type="match status" value="1"/>
</dbReference>
<dbReference type="Pfam" id="PF01118">
    <property type="entry name" value="Semialdhyde_dh"/>
    <property type="match status" value="1"/>
</dbReference>
<dbReference type="Pfam" id="PF22698">
    <property type="entry name" value="Semialdhyde_dhC_1"/>
    <property type="match status" value="1"/>
</dbReference>
<dbReference type="SMART" id="SM00859">
    <property type="entry name" value="Semialdhyde_dh"/>
    <property type="match status" value="1"/>
</dbReference>
<dbReference type="SUPFAM" id="SSF55347">
    <property type="entry name" value="Glyceraldehyde-3-phosphate dehydrogenase-like, C-terminal domain"/>
    <property type="match status" value="1"/>
</dbReference>
<dbReference type="SUPFAM" id="SSF51735">
    <property type="entry name" value="NAD(P)-binding Rossmann-fold domains"/>
    <property type="match status" value="1"/>
</dbReference>
<dbReference type="PROSITE" id="PS01224">
    <property type="entry name" value="ARGC"/>
    <property type="match status" value="1"/>
</dbReference>